<reference key="1">
    <citation type="journal article" date="2016" name="Cell Chem. Biol.">
        <title>Structural characterization and bioactivity analysis of the two-component lantibiotic Flv system from a ruminant bacterium.</title>
        <authorList>
            <person name="Zhao X."/>
            <person name="van der Donk W.A."/>
        </authorList>
    </citation>
    <scope>NUCLEOTIDE SEQUENCE [GENOMIC DNA]</scope>
    <scope>EXPRESSION IN E.COLI</scope>
    <scope>DEHYDRATION AT THR-37; THR-46 AND THR-48</scope>
    <scope>LANTHIONINE AND METHYLLANTHIONINE CROSS-LINKS</scope>
    <source>
        <strain>FD-1</strain>
    </source>
</reference>
<name>LAN2G_RUMFL</name>
<accession>P0DQL9</accession>
<gene>
    <name evidence="3" type="primary">FlvA2.g</name>
</gene>
<organism>
    <name type="scientific">Ruminococcus flavefaciens</name>
    <dbReference type="NCBI Taxonomy" id="1265"/>
    <lineage>
        <taxon>Bacteria</taxon>
        <taxon>Bacillati</taxon>
        <taxon>Bacillota</taxon>
        <taxon>Clostridia</taxon>
        <taxon>Eubacteriales</taxon>
        <taxon>Oscillospiraceae</taxon>
        <taxon>Ruminococcus</taxon>
    </lineage>
</organism>
<protein>
    <recommendedName>
        <fullName evidence="3">Lantibiotic Flvbeta.g</fullName>
    </recommendedName>
</protein>
<evidence type="ECO:0000250" key="1">
    <source>
        <dbReference type="UniProtKB" id="P86475"/>
    </source>
</evidence>
<evidence type="ECO:0000269" key="2">
    <source>
    </source>
</evidence>
<evidence type="ECO:0000303" key="3">
    <source>
    </source>
</evidence>
<evidence type="ECO:0000305" key="4"/>
<evidence type="ECO:0000305" key="5">
    <source>
    </source>
</evidence>
<comment type="function">
    <text evidence="1 2">Lanthionine-containing peptide antibiotic (lantibiotic) that is probably weakly active on Gram-positive bacteria, since its analog [Del1]Flvbeta.g shows weak antibacterial activity against M.luteus (PubMed:27028884). This activity is synergistically enhanced by [Del2]Flvalpha.a, an analog of Flvalpha.a, which is encoded by the same operon than Flvbeta.g (PubMed:27028884). The bactericidal activity of lantibiotics is based on depolarization of energized bacterial cytoplasmic membranes, initiated by the formation of aqueous transmembrane pores (By similarity).</text>
</comment>
<comment type="subcellular location">
    <subcellularLocation>
        <location evidence="4">Secreted</location>
    </subcellularLocation>
</comment>
<comment type="PTM">
    <text evidence="2">Contains LL-lanthionine and DL-beta-methyllanthionine, when coepressed in E.coli with the flavecin synthetase FlvM2.</text>
</comment>
<sequence>MNNNNFDMEKFKKLAAIVSEGEIDEMLDETTVGAASTLPCAEVVVTVTGIIVKATTGFDWCPTGACTHSCRF</sequence>
<keyword id="KW-0044">Antibiotic</keyword>
<keyword id="KW-0929">Antimicrobial</keyword>
<keyword id="KW-0078">Bacteriocin</keyword>
<keyword id="KW-0425">Lantibiotic</keyword>
<keyword id="KW-0964">Secreted</keyword>
<keyword id="KW-0883">Thioether bond</keyword>
<dbReference type="GO" id="GO:0005576">
    <property type="term" value="C:extracellular region"/>
    <property type="evidence" value="ECO:0007669"/>
    <property type="project" value="UniProtKB-SubCell"/>
</dbReference>
<dbReference type="GO" id="GO:0005102">
    <property type="term" value="F:signaling receptor binding"/>
    <property type="evidence" value="ECO:0007669"/>
    <property type="project" value="UniProtKB-KW"/>
</dbReference>
<dbReference type="GO" id="GO:0042742">
    <property type="term" value="P:defense response to bacterium"/>
    <property type="evidence" value="ECO:0007669"/>
    <property type="project" value="UniProtKB-KW"/>
</dbReference>
<dbReference type="GO" id="GO:0031640">
    <property type="term" value="P:killing of cells of another organism"/>
    <property type="evidence" value="ECO:0007669"/>
    <property type="project" value="UniProtKB-KW"/>
</dbReference>
<dbReference type="NCBIfam" id="NF038161">
    <property type="entry name" value="lant_II_LchA2"/>
    <property type="match status" value="1"/>
</dbReference>
<proteinExistence type="inferred from homology"/>
<feature type="propeptide" id="PRO_0000450408" description="Cleaved by FlvT" evidence="5">
    <location>
        <begin position="1"/>
        <end position="34"/>
    </location>
</feature>
<feature type="peptide" id="PRO_0000450409" description="Lantibiotic Flvbeta.g" evidence="5">
    <location>
        <begin position="35"/>
        <end position="72"/>
    </location>
</feature>
<feature type="modified residue" description="2,3-didehydrobutyrine; by FlvM2" evidence="5">
    <location>
        <position position="37"/>
    </location>
</feature>
<feature type="modified residue" description="2,3-didehydrobutyrine; by FlvM2" evidence="5">
    <location>
        <position position="46"/>
    </location>
</feature>
<feature type="modified residue" description="2,3-didehydrobutyrine; by FlvM2" evidence="5">
    <location>
        <position position="48"/>
    </location>
</feature>
<feature type="cross-link" description="Lanthionine (Ser-Cys); by FlvM2" evidence="5">
    <location>
        <begin position="36"/>
        <end position="40"/>
    </location>
</feature>
<feature type="cross-link" description="Beta-methyllanthionine (Thr-Cys); by FlvM2" evidence="5">
    <location>
        <begin position="55"/>
        <end position="61"/>
    </location>
</feature>
<feature type="cross-link" description="Beta-methyllanthionine (Thr-Cys); by FlvM2" evidence="5">
    <location>
        <begin position="63"/>
        <end position="66"/>
    </location>
</feature>
<feature type="cross-link" description="Beta-methyllanthionine (Thr-Cys); by FlvM2" evidence="5">
    <location>
        <begin position="67"/>
        <end position="70"/>
    </location>
</feature>